<gene>
    <name evidence="1" type="primary">cysI</name>
    <name type="ordered locus">GTNG_1270</name>
</gene>
<evidence type="ECO:0000255" key="1">
    <source>
        <dbReference type="HAMAP-Rule" id="MF_01540"/>
    </source>
</evidence>
<accession>A4IMT6</accession>
<keyword id="KW-0004">4Fe-4S</keyword>
<keyword id="KW-0028">Amino-acid biosynthesis</keyword>
<keyword id="KW-0198">Cysteine biosynthesis</keyword>
<keyword id="KW-0349">Heme</keyword>
<keyword id="KW-0408">Iron</keyword>
<keyword id="KW-0411">Iron-sulfur</keyword>
<keyword id="KW-0479">Metal-binding</keyword>
<keyword id="KW-0521">NADP</keyword>
<keyword id="KW-0560">Oxidoreductase</keyword>
<reference key="1">
    <citation type="journal article" date="2007" name="Proc. Natl. Acad. Sci. U.S.A.">
        <title>Genome and proteome of long-chain alkane degrading Geobacillus thermodenitrificans NG80-2 isolated from a deep-subsurface oil reservoir.</title>
        <authorList>
            <person name="Feng L."/>
            <person name="Wang W."/>
            <person name="Cheng J."/>
            <person name="Ren Y."/>
            <person name="Zhao G."/>
            <person name="Gao C."/>
            <person name="Tang Y."/>
            <person name="Liu X."/>
            <person name="Han W."/>
            <person name="Peng X."/>
            <person name="Liu R."/>
            <person name="Wang L."/>
        </authorList>
    </citation>
    <scope>NUCLEOTIDE SEQUENCE [LARGE SCALE GENOMIC DNA]</scope>
    <source>
        <strain>NG80-2</strain>
    </source>
</reference>
<feature type="chain" id="PRO_0000388488" description="Sulfite reductase [NADPH] hemoprotein beta-component">
    <location>
        <begin position="1"/>
        <end position="573"/>
    </location>
</feature>
<feature type="binding site" evidence="1">
    <location>
        <position position="438"/>
    </location>
    <ligand>
        <name>[4Fe-4S] cluster</name>
        <dbReference type="ChEBI" id="CHEBI:49883"/>
    </ligand>
</feature>
<feature type="binding site" evidence="1">
    <location>
        <position position="444"/>
    </location>
    <ligand>
        <name>[4Fe-4S] cluster</name>
        <dbReference type="ChEBI" id="CHEBI:49883"/>
    </ligand>
</feature>
<feature type="binding site" evidence="1">
    <location>
        <position position="483"/>
    </location>
    <ligand>
        <name>[4Fe-4S] cluster</name>
        <dbReference type="ChEBI" id="CHEBI:49883"/>
    </ligand>
</feature>
<feature type="binding site" evidence="1">
    <location>
        <position position="487"/>
    </location>
    <ligand>
        <name>[4Fe-4S] cluster</name>
        <dbReference type="ChEBI" id="CHEBI:49883"/>
    </ligand>
</feature>
<feature type="binding site" description="axial binding residue" evidence="1">
    <location>
        <position position="487"/>
    </location>
    <ligand>
        <name>siroheme</name>
        <dbReference type="ChEBI" id="CHEBI:60052"/>
    </ligand>
    <ligandPart>
        <name>Fe</name>
        <dbReference type="ChEBI" id="CHEBI:18248"/>
    </ligandPart>
</feature>
<sequence length="573" mass="64540">MAKVVLKAPDGPPSDVERIKRESRYLRGTLAETMEDPISAGIPDDDNRLMKFHGSYLQDDRDVRTERQKQKLEPAYQFMIRVRTPGGVATPEQWLVMDEIARKYANGTLKLTTRQAFQLHGVLKWNVKKTMQAINGALMTTLAACGDVNRNVMCNPNPYQSEVHAEVYEWAKLLSDHLLPKTRAYYEIWLDDEKVAGTPQVDGEEEPIYGPTYLPRKFKIGIAVPPSNDVDVFSQDIGLIAIVEDGKLAGFNVAIGGGMGMTHGDKTTYPQLAKVIGFCTPDQVVEVAEKIMTVQRDYGNRSVRKNARFKYTIDRLGLEVVKEEIERRLGWKLGEARPYHFEHNGDRYGWVEGVNGTWHFTLYVEGGRVKDDDDYKLMTGLREIAKVHTGDFRLTANQNLVIANVTSEKKAEIEALIAKYGLTDGKRYTALRRNSLACVALPTCGLAMAEAERYLPKLLDKIEEIIDENGLRDEEITIRMTGCPNGCARHVLAEIAFVGKAVGKYNMYLGAAFNGTRLGKLYRENIGEEEILRELRVLLARYAKERLDGEHFGDFVIRAGIVKEVTDGTNFHD</sequence>
<protein>
    <recommendedName>
        <fullName evidence="1">Sulfite reductase [NADPH] hemoprotein beta-component</fullName>
        <shortName evidence="1">SiR-HP</shortName>
        <shortName evidence="1">SiRHP</shortName>
        <ecNumber evidence="1">1.8.1.2</ecNumber>
    </recommendedName>
</protein>
<organism>
    <name type="scientific">Geobacillus thermodenitrificans (strain NG80-2)</name>
    <dbReference type="NCBI Taxonomy" id="420246"/>
    <lineage>
        <taxon>Bacteria</taxon>
        <taxon>Bacillati</taxon>
        <taxon>Bacillota</taxon>
        <taxon>Bacilli</taxon>
        <taxon>Bacillales</taxon>
        <taxon>Anoxybacillaceae</taxon>
        <taxon>Geobacillus</taxon>
    </lineage>
</organism>
<comment type="function">
    <text evidence="1">Component of the sulfite reductase complex that catalyzes the 6-electron reduction of sulfite to sulfide. This is one of several activities required for the biosynthesis of L-cysteine from sulfate.</text>
</comment>
<comment type="catalytic activity">
    <reaction evidence="1">
        <text>hydrogen sulfide + 3 NADP(+) + 3 H2O = sulfite + 3 NADPH + 4 H(+)</text>
        <dbReference type="Rhea" id="RHEA:13801"/>
        <dbReference type="ChEBI" id="CHEBI:15377"/>
        <dbReference type="ChEBI" id="CHEBI:15378"/>
        <dbReference type="ChEBI" id="CHEBI:17359"/>
        <dbReference type="ChEBI" id="CHEBI:29919"/>
        <dbReference type="ChEBI" id="CHEBI:57783"/>
        <dbReference type="ChEBI" id="CHEBI:58349"/>
        <dbReference type="EC" id="1.8.1.2"/>
    </reaction>
</comment>
<comment type="cofactor">
    <cofactor evidence="1">
        <name>siroheme</name>
        <dbReference type="ChEBI" id="CHEBI:60052"/>
    </cofactor>
    <text evidence="1">Binds 1 siroheme per subunit.</text>
</comment>
<comment type="cofactor">
    <cofactor evidence="1">
        <name>[4Fe-4S] cluster</name>
        <dbReference type="ChEBI" id="CHEBI:49883"/>
    </cofactor>
    <text evidence="1">Binds 1 [4Fe-4S] cluster per subunit.</text>
</comment>
<comment type="pathway">
    <text evidence="1">Sulfur metabolism; hydrogen sulfide biosynthesis; hydrogen sulfide from sulfite (NADPH route): step 1/1.</text>
</comment>
<comment type="subunit">
    <text evidence="1">Alpha(8)-beta(8). The alpha component is a flavoprotein, the beta component is a hemoprotein.</text>
</comment>
<comment type="similarity">
    <text evidence="1">Belongs to the nitrite and sulfite reductase 4Fe-4S domain family.</text>
</comment>
<name>CYSI_GEOTN</name>
<proteinExistence type="inferred from homology"/>
<dbReference type="EC" id="1.8.1.2" evidence="1"/>
<dbReference type="EMBL" id="CP000557">
    <property type="protein sequence ID" value="ABO66640.1"/>
    <property type="molecule type" value="Genomic_DNA"/>
</dbReference>
<dbReference type="RefSeq" id="WP_008879451.1">
    <property type="nucleotide sequence ID" value="NC_009328.1"/>
</dbReference>
<dbReference type="SMR" id="A4IMT6"/>
<dbReference type="GeneID" id="87621143"/>
<dbReference type="KEGG" id="gtn:GTNG_1270"/>
<dbReference type="eggNOG" id="COG0155">
    <property type="taxonomic scope" value="Bacteria"/>
</dbReference>
<dbReference type="HOGENOM" id="CLU_001975_3_2_9"/>
<dbReference type="UniPathway" id="UPA00140">
    <property type="reaction ID" value="UER00207"/>
</dbReference>
<dbReference type="Proteomes" id="UP000001578">
    <property type="component" value="Chromosome"/>
</dbReference>
<dbReference type="GO" id="GO:0009337">
    <property type="term" value="C:sulfite reductase complex (NADPH)"/>
    <property type="evidence" value="ECO:0007669"/>
    <property type="project" value="InterPro"/>
</dbReference>
<dbReference type="GO" id="GO:0051539">
    <property type="term" value="F:4 iron, 4 sulfur cluster binding"/>
    <property type="evidence" value="ECO:0007669"/>
    <property type="project" value="UniProtKB-KW"/>
</dbReference>
<dbReference type="GO" id="GO:0020037">
    <property type="term" value="F:heme binding"/>
    <property type="evidence" value="ECO:0007669"/>
    <property type="project" value="InterPro"/>
</dbReference>
<dbReference type="GO" id="GO:0046872">
    <property type="term" value="F:metal ion binding"/>
    <property type="evidence" value="ECO:0007669"/>
    <property type="project" value="UniProtKB-KW"/>
</dbReference>
<dbReference type="GO" id="GO:0050661">
    <property type="term" value="F:NADP binding"/>
    <property type="evidence" value="ECO:0007669"/>
    <property type="project" value="InterPro"/>
</dbReference>
<dbReference type="GO" id="GO:0050311">
    <property type="term" value="F:sulfite reductase (ferredoxin) activity"/>
    <property type="evidence" value="ECO:0007669"/>
    <property type="project" value="TreeGrafter"/>
</dbReference>
<dbReference type="GO" id="GO:0004783">
    <property type="term" value="F:sulfite reductase (NADPH) activity"/>
    <property type="evidence" value="ECO:0007669"/>
    <property type="project" value="UniProtKB-UniRule"/>
</dbReference>
<dbReference type="GO" id="GO:0019344">
    <property type="term" value="P:cysteine biosynthetic process"/>
    <property type="evidence" value="ECO:0007669"/>
    <property type="project" value="UniProtKB-KW"/>
</dbReference>
<dbReference type="GO" id="GO:0070814">
    <property type="term" value="P:hydrogen sulfide biosynthetic process"/>
    <property type="evidence" value="ECO:0007669"/>
    <property type="project" value="UniProtKB-UniRule"/>
</dbReference>
<dbReference type="GO" id="GO:0000103">
    <property type="term" value="P:sulfate assimilation"/>
    <property type="evidence" value="ECO:0007669"/>
    <property type="project" value="UniProtKB-UniRule"/>
</dbReference>
<dbReference type="FunFam" id="3.30.413.10:FF:000003">
    <property type="entry name" value="Sulfite reductase [NADPH] hemoprotein beta-component"/>
    <property type="match status" value="1"/>
</dbReference>
<dbReference type="FunFam" id="3.30.413.10:FF:000004">
    <property type="entry name" value="Sulfite reductase [NADPH] hemoprotein beta-component"/>
    <property type="match status" value="1"/>
</dbReference>
<dbReference type="Gene3D" id="3.30.413.10">
    <property type="entry name" value="Sulfite Reductase Hemoprotein, domain 1"/>
    <property type="match status" value="2"/>
</dbReference>
<dbReference type="HAMAP" id="MF_01540">
    <property type="entry name" value="CysI"/>
    <property type="match status" value="1"/>
</dbReference>
<dbReference type="InterPro" id="IPR011786">
    <property type="entry name" value="CysI"/>
</dbReference>
<dbReference type="InterPro" id="IPR005117">
    <property type="entry name" value="NiRdtase/SiRdtase_haem-b_fer"/>
</dbReference>
<dbReference type="InterPro" id="IPR036136">
    <property type="entry name" value="Nit/Sulf_reduc_fer-like_dom_sf"/>
</dbReference>
<dbReference type="InterPro" id="IPR006067">
    <property type="entry name" value="NO2/SO3_Rdtase_4Fe4S_dom"/>
</dbReference>
<dbReference type="InterPro" id="IPR045169">
    <property type="entry name" value="NO2/SO3_Rdtase_4Fe4S_prot"/>
</dbReference>
<dbReference type="InterPro" id="IPR045854">
    <property type="entry name" value="NO2/SO3_Rdtase_4Fe4S_sf"/>
</dbReference>
<dbReference type="InterPro" id="IPR006066">
    <property type="entry name" value="NO2/SO3_Rdtase_FeS/sirohaem_BS"/>
</dbReference>
<dbReference type="NCBIfam" id="TIGR02041">
    <property type="entry name" value="CysI"/>
    <property type="match status" value="1"/>
</dbReference>
<dbReference type="NCBIfam" id="NF010029">
    <property type="entry name" value="PRK13504.1"/>
    <property type="match status" value="1"/>
</dbReference>
<dbReference type="PANTHER" id="PTHR11493:SF47">
    <property type="entry name" value="SULFITE REDUCTASE [NADPH] SUBUNIT BETA"/>
    <property type="match status" value="1"/>
</dbReference>
<dbReference type="PANTHER" id="PTHR11493">
    <property type="entry name" value="SULFITE REDUCTASE [NADPH] SUBUNIT BETA-RELATED"/>
    <property type="match status" value="1"/>
</dbReference>
<dbReference type="Pfam" id="PF01077">
    <property type="entry name" value="NIR_SIR"/>
    <property type="match status" value="1"/>
</dbReference>
<dbReference type="Pfam" id="PF03460">
    <property type="entry name" value="NIR_SIR_ferr"/>
    <property type="match status" value="2"/>
</dbReference>
<dbReference type="PRINTS" id="PR00397">
    <property type="entry name" value="SIROHAEM"/>
</dbReference>
<dbReference type="SUPFAM" id="SSF56014">
    <property type="entry name" value="Nitrite and sulphite reductase 4Fe-4S domain-like"/>
    <property type="match status" value="2"/>
</dbReference>
<dbReference type="SUPFAM" id="SSF55124">
    <property type="entry name" value="Nitrite/Sulfite reductase N-terminal domain-like"/>
    <property type="match status" value="2"/>
</dbReference>
<dbReference type="PROSITE" id="PS00365">
    <property type="entry name" value="NIR_SIR"/>
    <property type="match status" value="1"/>
</dbReference>